<organism>
    <name type="scientific">Schizosaccharomyces pombe (strain 972 / ATCC 24843)</name>
    <name type="common">Fission yeast</name>
    <dbReference type="NCBI Taxonomy" id="284812"/>
    <lineage>
        <taxon>Eukaryota</taxon>
        <taxon>Fungi</taxon>
        <taxon>Dikarya</taxon>
        <taxon>Ascomycota</taxon>
        <taxon>Taphrinomycotina</taxon>
        <taxon>Schizosaccharomycetes</taxon>
        <taxon>Schizosaccharomycetales</taxon>
        <taxon>Schizosaccharomycetaceae</taxon>
        <taxon>Schizosaccharomyces</taxon>
    </lineage>
</organism>
<protein>
    <recommendedName>
        <fullName evidence="1">Probable mitochondrial pyruvate carrier 1</fullName>
        <shortName evidence="1">MPC1</shortName>
    </recommendedName>
</protein>
<keyword id="KW-0472">Membrane</keyword>
<keyword id="KW-0496">Mitochondrion</keyword>
<keyword id="KW-0999">Mitochondrion inner membrane</keyword>
<keyword id="KW-1185">Reference proteome</keyword>
<keyword id="KW-0812">Transmembrane</keyword>
<keyword id="KW-1133">Transmembrane helix</keyword>
<keyword id="KW-0813">Transport</keyword>
<gene>
    <name evidence="1 6" type="primary">mpc1</name>
    <name evidence="6" type="ORF">SPCC1235.11</name>
</gene>
<name>MPC1_SCHPO</name>
<accession>O74847</accession>
<reference evidence="5" key="1">
    <citation type="journal article" date="2002" name="Nature">
        <title>The genome sequence of Schizosaccharomyces pombe.</title>
        <authorList>
            <person name="Wood V."/>
            <person name="Gwilliam R."/>
            <person name="Rajandream M.A."/>
            <person name="Lyne M.H."/>
            <person name="Lyne R."/>
            <person name="Stewart A."/>
            <person name="Sgouros J.G."/>
            <person name="Peat N."/>
            <person name="Hayles J."/>
            <person name="Baker S.G."/>
            <person name="Basham D."/>
            <person name="Bowman S."/>
            <person name="Brooks K."/>
            <person name="Brown D."/>
            <person name="Brown S."/>
            <person name="Chillingworth T."/>
            <person name="Churcher C.M."/>
            <person name="Collins M."/>
            <person name="Connor R."/>
            <person name="Cronin A."/>
            <person name="Davis P."/>
            <person name="Feltwell T."/>
            <person name="Fraser A."/>
            <person name="Gentles S."/>
            <person name="Goble A."/>
            <person name="Hamlin N."/>
            <person name="Harris D.E."/>
            <person name="Hidalgo J."/>
            <person name="Hodgson G."/>
            <person name="Holroyd S."/>
            <person name="Hornsby T."/>
            <person name="Howarth S."/>
            <person name="Huckle E.J."/>
            <person name="Hunt S."/>
            <person name="Jagels K."/>
            <person name="James K.D."/>
            <person name="Jones L."/>
            <person name="Jones M."/>
            <person name="Leather S."/>
            <person name="McDonald S."/>
            <person name="McLean J."/>
            <person name="Mooney P."/>
            <person name="Moule S."/>
            <person name="Mungall K.L."/>
            <person name="Murphy L.D."/>
            <person name="Niblett D."/>
            <person name="Odell C."/>
            <person name="Oliver K."/>
            <person name="O'Neil S."/>
            <person name="Pearson D."/>
            <person name="Quail M.A."/>
            <person name="Rabbinowitsch E."/>
            <person name="Rutherford K.M."/>
            <person name="Rutter S."/>
            <person name="Saunders D."/>
            <person name="Seeger K."/>
            <person name="Sharp S."/>
            <person name="Skelton J."/>
            <person name="Simmonds M.N."/>
            <person name="Squares R."/>
            <person name="Squares S."/>
            <person name="Stevens K."/>
            <person name="Taylor K."/>
            <person name="Taylor R.G."/>
            <person name="Tivey A."/>
            <person name="Walsh S.V."/>
            <person name="Warren T."/>
            <person name="Whitehead S."/>
            <person name="Woodward J.R."/>
            <person name="Volckaert G."/>
            <person name="Aert R."/>
            <person name="Robben J."/>
            <person name="Grymonprez B."/>
            <person name="Weltjens I."/>
            <person name="Vanstreels E."/>
            <person name="Rieger M."/>
            <person name="Schaefer M."/>
            <person name="Mueller-Auer S."/>
            <person name="Gabel C."/>
            <person name="Fuchs M."/>
            <person name="Duesterhoeft A."/>
            <person name="Fritzc C."/>
            <person name="Holzer E."/>
            <person name="Moestl D."/>
            <person name="Hilbert H."/>
            <person name="Borzym K."/>
            <person name="Langer I."/>
            <person name="Beck A."/>
            <person name="Lehrach H."/>
            <person name="Reinhardt R."/>
            <person name="Pohl T.M."/>
            <person name="Eger P."/>
            <person name="Zimmermann W."/>
            <person name="Wedler H."/>
            <person name="Wambutt R."/>
            <person name="Purnelle B."/>
            <person name="Goffeau A."/>
            <person name="Cadieu E."/>
            <person name="Dreano S."/>
            <person name="Gloux S."/>
            <person name="Lelaure V."/>
            <person name="Mottier S."/>
            <person name="Galibert F."/>
            <person name="Aves S.J."/>
            <person name="Xiang Z."/>
            <person name="Hunt C."/>
            <person name="Moore K."/>
            <person name="Hurst S.M."/>
            <person name="Lucas M."/>
            <person name="Rochet M."/>
            <person name="Gaillardin C."/>
            <person name="Tallada V.A."/>
            <person name="Garzon A."/>
            <person name="Thode G."/>
            <person name="Daga R.R."/>
            <person name="Cruzado L."/>
            <person name="Jimenez J."/>
            <person name="Sanchez M."/>
            <person name="del Rey F."/>
            <person name="Benito J."/>
            <person name="Dominguez A."/>
            <person name="Revuelta J.L."/>
            <person name="Moreno S."/>
            <person name="Armstrong J."/>
            <person name="Forsburg S.L."/>
            <person name="Cerutti L."/>
            <person name="Lowe T."/>
            <person name="McCombie W.R."/>
            <person name="Paulsen I."/>
            <person name="Potashkin J."/>
            <person name="Shpakovski G.V."/>
            <person name="Ussery D."/>
            <person name="Barrell B.G."/>
            <person name="Nurse P."/>
        </authorList>
    </citation>
    <scope>NUCLEOTIDE SEQUENCE [LARGE SCALE GENOMIC DNA]</scope>
    <source>
        <strain>972 / ATCC 24843</strain>
    </source>
</reference>
<reference evidence="4" key="2">
    <citation type="journal article" date="2006" name="Nat. Biotechnol.">
        <title>ORFeome cloning and global analysis of protein localization in the fission yeast Schizosaccharomyces pombe.</title>
        <authorList>
            <person name="Matsuyama A."/>
            <person name="Arai R."/>
            <person name="Yashiroda Y."/>
            <person name="Shirai A."/>
            <person name="Kamata A."/>
            <person name="Sekido S."/>
            <person name="Kobayashi Y."/>
            <person name="Hashimoto A."/>
            <person name="Hamamoto M."/>
            <person name="Hiraoka Y."/>
            <person name="Horinouchi S."/>
            <person name="Yoshida M."/>
        </authorList>
    </citation>
    <scope>SUBCELLULAR LOCATION [LARGE SCALE ANALYSIS]</scope>
</reference>
<feature type="chain" id="PRO_0000318135" description="Probable mitochondrial pyruvate carrier 1">
    <location>
        <begin position="1"/>
        <end position="141"/>
    </location>
</feature>
<feature type="transmembrane region" description="Helical" evidence="2">
    <location>
        <begin position="31"/>
        <end position="52"/>
    </location>
</feature>
<feature type="transmembrane region" description="Helical" evidence="2">
    <location>
        <begin position="60"/>
        <end position="82"/>
    </location>
</feature>
<comment type="function">
    <text evidence="1">Mediates the uptake of pyruvate into mitochondria.</text>
</comment>
<comment type="subunit">
    <text evidence="1">The functional 150 kDa pyruvate import complex is a heteromer of mpc1 and mpc2.</text>
</comment>
<comment type="subcellular location">
    <subcellularLocation>
        <location evidence="3">Mitochondrion</location>
    </subcellularLocation>
    <subcellularLocation>
        <location evidence="1">Mitochondrion inner membrane</location>
        <topology evidence="2">Multi-pass membrane protein</topology>
    </subcellularLocation>
</comment>
<comment type="similarity">
    <text evidence="4">Belongs to the mitochondrial pyruvate carrier (MPC) (TC 2.A.105) family.</text>
</comment>
<evidence type="ECO:0000250" key="1">
    <source>
        <dbReference type="UniProtKB" id="P53157"/>
    </source>
</evidence>
<evidence type="ECO:0000255" key="2"/>
<evidence type="ECO:0000269" key="3">
    <source>
    </source>
</evidence>
<evidence type="ECO:0000305" key="4"/>
<evidence type="ECO:0000312" key="5">
    <source>
        <dbReference type="EMBL" id="CAA21115.2"/>
    </source>
</evidence>
<evidence type="ECO:0000312" key="6">
    <source>
        <dbReference type="PomBase" id="SPCC1235.11"/>
    </source>
</evidence>
<dbReference type="EMBL" id="CU329672">
    <property type="protein sequence ID" value="CAA21115.2"/>
    <property type="molecule type" value="Genomic_DNA"/>
</dbReference>
<dbReference type="PIR" id="T40885">
    <property type="entry name" value="T40885"/>
</dbReference>
<dbReference type="RefSeq" id="NP_587737.1">
    <property type="nucleotide sequence ID" value="NM_001022732.2"/>
</dbReference>
<dbReference type="BioGRID" id="275740">
    <property type="interactions" value="58"/>
</dbReference>
<dbReference type="FunCoup" id="O74847">
    <property type="interactions" value="145"/>
</dbReference>
<dbReference type="STRING" id="284812.O74847"/>
<dbReference type="iPTMnet" id="O74847"/>
<dbReference type="PaxDb" id="4896-SPCC1235.11.1"/>
<dbReference type="EnsemblFungi" id="SPCC1235.11.1">
    <property type="protein sequence ID" value="SPCC1235.11.1:pep"/>
    <property type="gene ID" value="SPCC1235.11"/>
</dbReference>
<dbReference type="GeneID" id="2539169"/>
<dbReference type="KEGG" id="spo:2539169"/>
<dbReference type="PomBase" id="SPCC1235.11">
    <property type="gene designation" value="mpc1"/>
</dbReference>
<dbReference type="VEuPathDB" id="FungiDB:SPCC1235.11"/>
<dbReference type="eggNOG" id="KOG1590">
    <property type="taxonomic scope" value="Eukaryota"/>
</dbReference>
<dbReference type="HOGENOM" id="CLU_099502_3_0_1"/>
<dbReference type="InParanoid" id="O74847"/>
<dbReference type="OMA" id="CTTHFWG"/>
<dbReference type="PhylomeDB" id="O74847"/>
<dbReference type="PRO" id="PR:O74847"/>
<dbReference type="Proteomes" id="UP000002485">
    <property type="component" value="Chromosome III"/>
</dbReference>
<dbReference type="GO" id="GO:0005743">
    <property type="term" value="C:mitochondrial inner membrane"/>
    <property type="evidence" value="ECO:0000318"/>
    <property type="project" value="GO_Central"/>
</dbReference>
<dbReference type="GO" id="GO:0005739">
    <property type="term" value="C:mitochondrion"/>
    <property type="evidence" value="ECO:0007005"/>
    <property type="project" value="PomBase"/>
</dbReference>
<dbReference type="GO" id="GO:0050833">
    <property type="term" value="F:pyruvate transmembrane transporter activity"/>
    <property type="evidence" value="ECO:0000318"/>
    <property type="project" value="GO_Central"/>
</dbReference>
<dbReference type="GO" id="GO:0006850">
    <property type="term" value="P:mitochondrial pyruvate transmembrane transport"/>
    <property type="evidence" value="ECO:0000318"/>
    <property type="project" value="GO_Central"/>
</dbReference>
<dbReference type="InterPro" id="IPR005336">
    <property type="entry name" value="MPC"/>
</dbReference>
<dbReference type="PANTHER" id="PTHR14154">
    <property type="entry name" value="UPF0041 BRAIN PROTEIN 44-RELATED"/>
    <property type="match status" value="1"/>
</dbReference>
<dbReference type="Pfam" id="PF03650">
    <property type="entry name" value="MPC"/>
    <property type="match status" value="1"/>
</dbReference>
<proteinExistence type="inferred from homology"/>
<sequence length="141" mass="16056">MNASEKLSQKAAQSVTRRFITWLKSPDFRKYLCSTHFWGPLSNFGIPIAAILDLKKDPRLISGRMTGALILYSSVFMRYAWMVSPRNYLLLGCHAFNTTVQTAQGIRFVNFWYGKEGASKQSVFENIMQAAKHPESGTRQK</sequence>